<reference key="1">
    <citation type="submission" date="2006-10" db="EMBL/GenBank/DDBJ databases">
        <authorList>
            <consortium name="NIH - Xenopus Gene Collection (XGC) project"/>
        </authorList>
    </citation>
    <scope>NUCLEOTIDE SEQUENCE [LARGE SCALE MRNA]</scope>
    <source>
        <tissue>Ovary</tissue>
    </source>
</reference>
<keyword id="KW-0053">Apoptosis</keyword>
<keyword id="KW-0256">Endoplasmic reticulum</keyword>
<keyword id="KW-0325">Glycoprotein</keyword>
<keyword id="KW-0472">Membrane</keyword>
<keyword id="KW-1185">Reference proteome</keyword>
<keyword id="KW-0812">Transmembrane</keyword>
<keyword id="KW-1133">Transmembrane helix</keyword>
<gene>
    <name type="primary">tmem214-a</name>
</gene>
<sequence>MASGAPDGKWKVVKKGKKSGEKGGGRKALSESNVTPGGTAPIKMANTVYEMGFEQILKKQNKEQVPPNNIPAEQPQKKQQQQQNPGRKKPQSGDTGSRQRKFHTLEEGLKALDLAELQRELEKSQNMFPESPSIWVKDLAGYLNYKLQTVKNDVLIQQSHDYPYCLVNKELKGIVRSLLAKAPHVLDVMVDHCIFSMFQELDKPTGESLHGYRICLQAVLLDKPKTVTNNLPKYLELLRSQVNRPMKCLAVMWAVGQAGFTDLSEGLKVWLGLMFPVLGVKTLTPYAILYLDRLLLAHSNLTKGFGMIGPKDFFPLLDFAFMPNNSLTSSQQENLRNLYPRLKVLAFGATPESTLHTYFPSFLSRVTPSCPAEMRKELINSLTDCLNKDPLSFSVWRQLYTKHLSQSSFLLQHLVETWDSNSKAMRKSVRETVHSFKVTNGEFSGKGSSLKDLEACDAACQALLHKMKGSGFPWRRLIVIAFVFLFGFVFYDVRTHNSFQASTSHKVLQQSGLLSVSQQAWSKVSNYSLQGQSWLERNVPQYYSQAVEVLGPVLEQVWAKTQEGAAYACEKGSVLITYTKDNLPRLIEWLHSHTPDSVCQFIEYLRELLLHLHRTYLLPAVTYLEAAVQNAWQQYVASCNGKVTWDCVRGQVSNISHSSWTYLQNTTMTVTNWALSIISHH</sequence>
<feature type="chain" id="PRO_0000321900" description="Transmembrane protein 214-A">
    <location>
        <begin position="1"/>
        <end position="681"/>
    </location>
</feature>
<feature type="transmembrane region" description="Helical" evidence="2">
    <location>
        <begin position="471"/>
        <end position="491"/>
    </location>
</feature>
<feature type="transmembrane region" description="Helical" evidence="2">
    <location>
        <begin position="608"/>
        <end position="628"/>
    </location>
</feature>
<feature type="region of interest" description="Disordered" evidence="3">
    <location>
        <begin position="1"/>
        <end position="41"/>
    </location>
</feature>
<feature type="region of interest" description="Disordered" evidence="3">
    <location>
        <begin position="58"/>
        <end position="99"/>
    </location>
</feature>
<feature type="glycosylation site" description="N-linked (GlcNAc...) asparagine" evidence="2">
    <location>
        <position position="300"/>
    </location>
</feature>
<feature type="glycosylation site" description="N-linked (GlcNAc...) asparagine" evidence="2">
    <location>
        <position position="324"/>
    </location>
</feature>
<dbReference type="EMBL" id="BC126031">
    <property type="protein sequence ID" value="AAI26032.1"/>
    <property type="molecule type" value="mRNA"/>
</dbReference>
<dbReference type="RefSeq" id="NP_001090439.1">
    <property type="nucleotide sequence ID" value="NM_001096970.1"/>
</dbReference>
<dbReference type="SMR" id="A0JMW6"/>
<dbReference type="GlyCosmos" id="A0JMW6">
    <property type="glycosylation" value="2 sites, No reported glycans"/>
</dbReference>
<dbReference type="DNASU" id="779351"/>
<dbReference type="GeneID" id="779351"/>
<dbReference type="KEGG" id="xla:779351"/>
<dbReference type="AGR" id="Xenbase:XB-GENE-6252459"/>
<dbReference type="CTD" id="779351"/>
<dbReference type="Xenbase" id="XB-GENE-6252459">
    <property type="gene designation" value="tmem214.L"/>
</dbReference>
<dbReference type="OrthoDB" id="10022292at2759"/>
<dbReference type="Proteomes" id="UP000186698">
    <property type="component" value="Chromosome 5L"/>
</dbReference>
<dbReference type="Bgee" id="779351">
    <property type="expression patterns" value="Expressed in liver and 19 other cell types or tissues"/>
</dbReference>
<dbReference type="GO" id="GO:0005881">
    <property type="term" value="C:cytoplasmic microtubule"/>
    <property type="evidence" value="ECO:0000250"/>
    <property type="project" value="UniProtKB"/>
</dbReference>
<dbReference type="GO" id="GO:0005783">
    <property type="term" value="C:endoplasmic reticulum"/>
    <property type="evidence" value="ECO:0000318"/>
    <property type="project" value="GO_Central"/>
</dbReference>
<dbReference type="GO" id="GO:0005789">
    <property type="term" value="C:endoplasmic reticulum membrane"/>
    <property type="evidence" value="ECO:0007669"/>
    <property type="project" value="UniProtKB-SubCell"/>
</dbReference>
<dbReference type="GO" id="GO:0005794">
    <property type="term" value="C:Golgi apparatus"/>
    <property type="evidence" value="ECO:0000318"/>
    <property type="project" value="GO_Central"/>
</dbReference>
<dbReference type="GO" id="GO:0006915">
    <property type="term" value="P:apoptotic process"/>
    <property type="evidence" value="ECO:0007669"/>
    <property type="project" value="UniProtKB-KW"/>
</dbReference>
<dbReference type="InterPro" id="IPR016024">
    <property type="entry name" value="ARM-type_fold"/>
</dbReference>
<dbReference type="InterPro" id="IPR019308">
    <property type="entry name" value="TMEM214"/>
</dbReference>
<dbReference type="PANTHER" id="PTHR13448">
    <property type="entry name" value="TRANSMEMBRANE PROTEIN 214"/>
    <property type="match status" value="1"/>
</dbReference>
<dbReference type="PANTHER" id="PTHR13448:SF0">
    <property type="entry name" value="TRANSMEMBRANE PROTEIN 214"/>
    <property type="match status" value="1"/>
</dbReference>
<dbReference type="Pfam" id="PF10151">
    <property type="entry name" value="TMEM214"/>
    <property type="match status" value="1"/>
</dbReference>
<dbReference type="SUPFAM" id="SSF48371">
    <property type="entry name" value="ARM repeat"/>
    <property type="match status" value="1"/>
</dbReference>
<name>T214A_XENLA</name>
<evidence type="ECO:0000250" key="1"/>
<evidence type="ECO:0000255" key="2"/>
<evidence type="ECO:0000256" key="3">
    <source>
        <dbReference type="SAM" id="MobiDB-lite"/>
    </source>
</evidence>
<evidence type="ECO:0000305" key="4"/>
<accession>A0JMW6</accession>
<proteinExistence type="evidence at transcript level"/>
<comment type="function">
    <text evidence="1">Critical mediator, in cooperation with CASP4, of endoplasmic reticulum-stress induced apoptosis. Required or the activation of CASP4 following endoplasmic reticulum stress (By similarity).</text>
</comment>
<comment type="subunit">
    <text evidence="1">Constitutively interacts with CASP4; required for the localization of procaspase 4 to the ER.</text>
</comment>
<comment type="subcellular location">
    <subcellularLocation>
        <location evidence="1">Endoplasmic reticulum membrane</location>
        <topology evidence="1">Multi-pass membrane protein</topology>
    </subcellularLocation>
</comment>
<comment type="similarity">
    <text evidence="4">Belongs to the TMEM214 family.</text>
</comment>
<protein>
    <recommendedName>
        <fullName>Transmembrane protein 214-A</fullName>
    </recommendedName>
</protein>
<organism>
    <name type="scientific">Xenopus laevis</name>
    <name type="common">African clawed frog</name>
    <dbReference type="NCBI Taxonomy" id="8355"/>
    <lineage>
        <taxon>Eukaryota</taxon>
        <taxon>Metazoa</taxon>
        <taxon>Chordata</taxon>
        <taxon>Craniata</taxon>
        <taxon>Vertebrata</taxon>
        <taxon>Euteleostomi</taxon>
        <taxon>Amphibia</taxon>
        <taxon>Batrachia</taxon>
        <taxon>Anura</taxon>
        <taxon>Pipoidea</taxon>
        <taxon>Pipidae</taxon>
        <taxon>Xenopodinae</taxon>
        <taxon>Xenopus</taxon>
        <taxon>Xenopus</taxon>
    </lineage>
</organism>